<proteinExistence type="evidence at protein level"/>
<organism>
    <name type="scientific">Arabidopsis thaliana</name>
    <name type="common">Mouse-ear cress</name>
    <dbReference type="NCBI Taxonomy" id="3702"/>
    <lineage>
        <taxon>Eukaryota</taxon>
        <taxon>Viridiplantae</taxon>
        <taxon>Streptophyta</taxon>
        <taxon>Embryophyta</taxon>
        <taxon>Tracheophyta</taxon>
        <taxon>Spermatophyta</taxon>
        <taxon>Magnoliopsida</taxon>
        <taxon>eudicotyledons</taxon>
        <taxon>Gunneridae</taxon>
        <taxon>Pentapetalae</taxon>
        <taxon>rosids</taxon>
        <taxon>malvids</taxon>
        <taxon>Brassicales</taxon>
        <taxon>Brassicaceae</taxon>
        <taxon>Camelineae</taxon>
        <taxon>Arabidopsis</taxon>
    </lineage>
</organism>
<evidence type="ECO:0000250" key="1"/>
<evidence type="ECO:0000250" key="2">
    <source>
        <dbReference type="UniProtKB" id="Q9LPZ9"/>
    </source>
</evidence>
<evidence type="ECO:0000255" key="3"/>
<evidence type="ECO:0000255" key="4">
    <source>
        <dbReference type="PROSITE-ProRule" id="PRU00038"/>
    </source>
</evidence>
<evidence type="ECO:0000255" key="5">
    <source>
        <dbReference type="PROSITE-ProRule" id="PRU00159"/>
    </source>
</evidence>
<evidence type="ECO:0000255" key="6">
    <source>
        <dbReference type="PROSITE-ProRule" id="PRU00315"/>
    </source>
</evidence>
<evidence type="ECO:0000255" key="7">
    <source>
        <dbReference type="PROSITE-ProRule" id="PRU10027"/>
    </source>
</evidence>
<evidence type="ECO:0000256" key="8">
    <source>
        <dbReference type="SAM" id="MobiDB-lite"/>
    </source>
</evidence>
<evidence type="ECO:0000305" key="9"/>
<evidence type="ECO:0000305" key="10">
    <source>
    </source>
</evidence>
<feature type="signal peptide" evidence="3">
    <location>
        <begin position="1"/>
        <end position="29"/>
    </location>
</feature>
<feature type="chain" id="PRO_0000401308" description="G-type lectin S-receptor-like serine/threonine-protein kinase At1g11330">
    <location>
        <begin position="30"/>
        <end position="842"/>
    </location>
</feature>
<feature type="topological domain" description="Extracellular" evidence="3">
    <location>
        <begin position="30"/>
        <end position="444"/>
    </location>
</feature>
<feature type="transmembrane region" description="Helical" evidence="3">
    <location>
        <begin position="445"/>
        <end position="465"/>
    </location>
</feature>
<feature type="topological domain" description="Cytoplasmic" evidence="3">
    <location>
        <begin position="466"/>
        <end position="842"/>
    </location>
</feature>
<feature type="domain" description="Bulb-type lectin" evidence="4">
    <location>
        <begin position="32"/>
        <end position="157"/>
    </location>
</feature>
<feature type="domain" description="EGF-like; atypical">
    <location>
        <begin position="294"/>
        <end position="330"/>
    </location>
</feature>
<feature type="domain" description="PAN" evidence="6">
    <location>
        <begin position="349"/>
        <end position="435"/>
    </location>
</feature>
<feature type="domain" description="Protein kinase" evidence="5">
    <location>
        <begin position="524"/>
        <end position="810"/>
    </location>
</feature>
<feature type="region of interest" description="CaM-binding" evidence="1">
    <location>
        <begin position="613"/>
        <end position="630"/>
    </location>
</feature>
<feature type="region of interest" description="Disordered" evidence="8">
    <location>
        <begin position="814"/>
        <end position="842"/>
    </location>
</feature>
<feature type="compositionally biased region" description="Low complexity" evidence="8">
    <location>
        <begin position="818"/>
        <end position="827"/>
    </location>
</feature>
<feature type="compositionally biased region" description="Polar residues" evidence="8">
    <location>
        <begin position="828"/>
        <end position="842"/>
    </location>
</feature>
<feature type="active site" description="Proton acceptor" evidence="5 7">
    <location>
        <position position="649"/>
    </location>
</feature>
<feature type="binding site" evidence="5">
    <location>
        <begin position="530"/>
        <end position="538"/>
    </location>
    <ligand>
        <name>ATP</name>
        <dbReference type="ChEBI" id="CHEBI:30616"/>
    </ligand>
</feature>
<feature type="binding site" evidence="5">
    <location>
        <position position="552"/>
    </location>
    <ligand>
        <name>ATP</name>
        <dbReference type="ChEBI" id="CHEBI:30616"/>
    </ligand>
</feature>
<feature type="modified residue" description="Phosphoserine" evidence="2">
    <location>
        <position position="558"/>
    </location>
</feature>
<feature type="modified residue" description="Phosphoserine" evidence="2">
    <location>
        <position position="573"/>
    </location>
</feature>
<feature type="modified residue" description="Phosphoserine" evidence="2">
    <location>
        <position position="653"/>
    </location>
</feature>
<feature type="modified residue" description="Phosphoserine" evidence="2">
    <location>
        <position position="666"/>
    </location>
</feature>
<feature type="modified residue" description="Phosphothreonine" evidence="2">
    <location>
        <position position="683"/>
    </location>
</feature>
<feature type="modified residue" description="Phosphoserine" evidence="2">
    <location>
        <position position="726"/>
    </location>
</feature>
<feature type="modified residue" description="Phosphoserine" evidence="2">
    <location>
        <position position="727"/>
    </location>
</feature>
<feature type="modified residue" description="Phosphoserine" evidence="2">
    <location>
        <position position="821"/>
    </location>
</feature>
<feature type="modified residue" description="Phosphoserine" evidence="2">
    <location>
        <position position="830"/>
    </location>
</feature>
<feature type="modified residue" description="Phosphothreonine" evidence="2">
    <location>
        <position position="837"/>
    </location>
</feature>
<feature type="glycosylation site" description="N-linked (GlcNAc...) asparagine" evidence="3">
    <location>
        <position position="63"/>
    </location>
</feature>
<feature type="glycosylation site" description="N-linked (GlcNAc...) asparagine" evidence="3">
    <location>
        <position position="94"/>
    </location>
</feature>
<feature type="glycosylation site" description="N-linked (GlcNAc...) asparagine" evidence="3">
    <location>
        <position position="122"/>
    </location>
</feature>
<feature type="glycosylation site" description="N-linked (GlcNAc...) asparagine" evidence="3">
    <location>
        <position position="130"/>
    </location>
</feature>
<feature type="glycosylation site" description="N-linked (GlcNAc...) asparagine" evidence="3">
    <location>
        <position position="196"/>
    </location>
</feature>
<feature type="glycosylation site" description="N-linked (GlcNAc...) asparagine" evidence="3">
    <location>
        <position position="260"/>
    </location>
</feature>
<feature type="glycosylation site" description="N-linked (GlcNAc...) asparagine" evidence="3">
    <location>
        <position position="328"/>
    </location>
</feature>
<feature type="glycosylation site" description="N-linked (GlcNAc...) asparagine" evidence="3">
    <location>
        <position position="336"/>
    </location>
</feature>
<feature type="glycosylation site" description="N-linked (GlcNAc...) asparagine" evidence="3">
    <location>
        <position position="354"/>
    </location>
</feature>
<feature type="glycosylation site" description="N-linked (GlcNAc...) asparagine" evidence="3">
    <location>
        <position position="396"/>
    </location>
</feature>
<feature type="disulfide bond" evidence="1">
    <location>
        <begin position="298"/>
        <end position="310"/>
    </location>
</feature>
<feature type="disulfide bond" evidence="1">
    <location>
        <begin position="304"/>
        <end position="318"/>
    </location>
</feature>
<feature type="disulfide bond" evidence="1">
    <location>
        <begin position="389"/>
        <end position="410"/>
    </location>
</feature>
<feature type="disulfide bond" evidence="1">
    <location>
        <begin position="393"/>
        <end position="399"/>
    </location>
</feature>
<sequence>MVVSVTIRRRFVLLLLACTCLLSRRLCFGEDRITFSSPIKDSESETLLCKSGIFRFGFFTPVNSTTRLRYVGIWYEKIPIQTVVWVANKDSPINDTSGVISIYQDGNLAVTDGRNRLVWSTNVSVPVAPNATWVQLMDSGNLMLQDNRNNGEILWESFKHPYDSFMPRMTLGTDGRTGGNLKLTSWTSHDDPSTGNYTAGIAPFTFPELLIWKNNVPTWRSGPWNGQVFIGLPNMDSLLFLDGFNLNSDNQGTISMSYANDSFMYHFNLDPEGIIYQKDWSTSMRTWRIGVKFPYTDCDAYGRCGRFGSCHAGENPPCKCVKGFVPKNNTEWNGGNWSNGCMRKAPLQCERQRNVSNGGGGGKADGFLKLQKMKVPISAERSEASEQVCPKVCLDNCSCTAYAYDRGIGCMLWSGDLVDMQSFLGSGIDLFIRVAHSELKTHSNLAVMIAAPVIGVMLIAAVCVLLACRKYKKRPAPAKDRSAELMFKRMEALTSDNESASNQIKLKELPLFEFQVLATSTDSFSLRNKLGQGGFGPVYKGKLPEGQEIAVKRLSRKSGQGLEELMNEVVVISKLQHRNLVKLLGCCIEGEERMLVYEYMPKKSLDAYLFDPMKQKILDWKTRFNIMEGICRGLLYLHRDSRLKIIHRDLKASNILLDENLNPKISDFGLARIFRANEDEANTRRVVGTYGYMSPEYAMEGFFSEKSDVFSLGVIFLEIISGRRNSSSHKEENNLNLLAYAWKLWNDGEAASLADPAVFDKCFEKEIEKCVHIGLLCVQEVANDRPNVSNVIWMLTTENMSLADPKQPAFIVRRGASEAESSDQSSQKVSINDVSLTAVTGR</sequence>
<keyword id="KW-0025">Alternative splicing</keyword>
<keyword id="KW-0067">ATP-binding</keyword>
<keyword id="KW-1003">Cell membrane</keyword>
<keyword id="KW-1015">Disulfide bond</keyword>
<keyword id="KW-0245">EGF-like domain</keyword>
<keyword id="KW-0325">Glycoprotein</keyword>
<keyword id="KW-0418">Kinase</keyword>
<keyword id="KW-0430">Lectin</keyword>
<keyword id="KW-0472">Membrane</keyword>
<keyword id="KW-0547">Nucleotide-binding</keyword>
<keyword id="KW-0597">Phosphoprotein</keyword>
<keyword id="KW-0675">Receptor</keyword>
<keyword id="KW-1185">Reference proteome</keyword>
<keyword id="KW-0723">Serine/threonine-protein kinase</keyword>
<keyword id="KW-0732">Signal</keyword>
<keyword id="KW-0808">Transferase</keyword>
<keyword id="KW-0812">Transmembrane</keyword>
<keyword id="KW-1133">Transmembrane helix</keyword>
<dbReference type="EC" id="2.7.11.1"/>
<dbReference type="EMBL" id="AC007259">
    <property type="protein sequence ID" value="AAD49989.1"/>
    <property type="status" value="ALT_SEQ"/>
    <property type="molecule type" value="Genomic_DNA"/>
</dbReference>
<dbReference type="EMBL" id="CP002684">
    <property type="protein sequence ID" value="AEE28719.1"/>
    <property type="molecule type" value="Genomic_DNA"/>
</dbReference>
<dbReference type="EMBL" id="AK229855">
    <property type="protein sequence ID" value="BAF01684.1"/>
    <property type="molecule type" value="mRNA"/>
</dbReference>
<dbReference type="PIR" id="D86247">
    <property type="entry name" value="D86247"/>
</dbReference>
<dbReference type="RefSeq" id="NP_001184962.1">
    <molecule id="Q9SXB8-1"/>
    <property type="nucleotide sequence ID" value="NM_001198033.2"/>
</dbReference>
<dbReference type="SMR" id="Q9SXB8"/>
<dbReference type="BioGRID" id="22915">
    <property type="interactions" value="26"/>
</dbReference>
<dbReference type="FunCoup" id="Q9SXB8">
    <property type="interactions" value="16"/>
</dbReference>
<dbReference type="IntAct" id="Q9SXB8">
    <property type="interactions" value="25"/>
</dbReference>
<dbReference type="STRING" id="3702.Q9SXB8"/>
<dbReference type="GlyGen" id="Q9SXB8">
    <property type="glycosylation" value="10 sites"/>
</dbReference>
<dbReference type="iPTMnet" id="Q9SXB8"/>
<dbReference type="SwissPalm" id="Q9SXB8"/>
<dbReference type="PaxDb" id="3702-AT1G11330.2"/>
<dbReference type="ProteomicsDB" id="242499">
    <molecule id="Q9SXB8-1"/>
</dbReference>
<dbReference type="EnsemblPlants" id="AT1G11330.2">
    <molecule id="Q9SXB8-1"/>
    <property type="protein sequence ID" value="AT1G11330.2"/>
    <property type="gene ID" value="AT1G11330"/>
</dbReference>
<dbReference type="GeneID" id="837675"/>
<dbReference type="Gramene" id="AT1G11330.2">
    <molecule id="Q9SXB8-1"/>
    <property type="protein sequence ID" value="AT1G11330.2"/>
    <property type="gene ID" value="AT1G11330"/>
</dbReference>
<dbReference type="KEGG" id="ath:AT1G11330"/>
<dbReference type="Araport" id="AT1G11330"/>
<dbReference type="TAIR" id="AT1G11330">
    <property type="gene designation" value="RDA2"/>
</dbReference>
<dbReference type="eggNOG" id="ENOG502QSUU">
    <property type="taxonomic scope" value="Eukaryota"/>
</dbReference>
<dbReference type="InParanoid" id="Q9SXB8"/>
<dbReference type="PhylomeDB" id="Q9SXB8"/>
<dbReference type="PRO" id="PR:Q9SXB8"/>
<dbReference type="Proteomes" id="UP000006548">
    <property type="component" value="Chromosome 1"/>
</dbReference>
<dbReference type="ExpressionAtlas" id="Q9SXB8">
    <property type="expression patterns" value="baseline and differential"/>
</dbReference>
<dbReference type="GO" id="GO:0005576">
    <property type="term" value="C:extracellular region"/>
    <property type="evidence" value="ECO:0007005"/>
    <property type="project" value="TAIR"/>
</dbReference>
<dbReference type="GO" id="GO:0005886">
    <property type="term" value="C:plasma membrane"/>
    <property type="evidence" value="ECO:0007005"/>
    <property type="project" value="TAIR"/>
</dbReference>
<dbReference type="GO" id="GO:0005524">
    <property type="term" value="F:ATP binding"/>
    <property type="evidence" value="ECO:0007669"/>
    <property type="project" value="UniProtKB-KW"/>
</dbReference>
<dbReference type="GO" id="GO:0005516">
    <property type="term" value="F:calmodulin binding"/>
    <property type="evidence" value="ECO:0000250"/>
    <property type="project" value="UniProtKB"/>
</dbReference>
<dbReference type="GO" id="GO:0030246">
    <property type="term" value="F:carbohydrate binding"/>
    <property type="evidence" value="ECO:0007669"/>
    <property type="project" value="UniProtKB-KW"/>
</dbReference>
<dbReference type="GO" id="GO:0004672">
    <property type="term" value="F:protein kinase activity"/>
    <property type="evidence" value="ECO:0000314"/>
    <property type="project" value="TAIR"/>
</dbReference>
<dbReference type="GO" id="GO:0106310">
    <property type="term" value="F:protein serine kinase activity"/>
    <property type="evidence" value="ECO:0007669"/>
    <property type="project" value="RHEA"/>
</dbReference>
<dbReference type="GO" id="GO:0004674">
    <property type="term" value="F:protein serine/threonine kinase activity"/>
    <property type="evidence" value="ECO:0000250"/>
    <property type="project" value="UniProtKB"/>
</dbReference>
<dbReference type="GO" id="GO:0006955">
    <property type="term" value="P:immune response"/>
    <property type="evidence" value="ECO:0000315"/>
    <property type="project" value="TAIR"/>
</dbReference>
<dbReference type="GO" id="GO:0006468">
    <property type="term" value="P:protein phosphorylation"/>
    <property type="evidence" value="ECO:0000314"/>
    <property type="project" value="TAIR"/>
</dbReference>
<dbReference type="GO" id="GO:0048544">
    <property type="term" value="P:recognition of pollen"/>
    <property type="evidence" value="ECO:0007669"/>
    <property type="project" value="InterPro"/>
</dbReference>
<dbReference type="CDD" id="cd00028">
    <property type="entry name" value="B_lectin"/>
    <property type="match status" value="1"/>
</dbReference>
<dbReference type="CDD" id="cd01098">
    <property type="entry name" value="PAN_AP_plant"/>
    <property type="match status" value="1"/>
</dbReference>
<dbReference type="CDD" id="cd14066">
    <property type="entry name" value="STKc_IRAK"/>
    <property type="match status" value="1"/>
</dbReference>
<dbReference type="FunFam" id="1.10.510.10:FF:000060">
    <property type="entry name" value="G-type lectin S-receptor-like serine/threonine-protein kinase"/>
    <property type="match status" value="1"/>
</dbReference>
<dbReference type="FunFam" id="2.90.10.10:FF:000001">
    <property type="entry name" value="G-type lectin S-receptor-like serine/threonine-protein kinase"/>
    <property type="match status" value="1"/>
</dbReference>
<dbReference type="FunFam" id="3.30.200.20:FF:000145">
    <property type="entry name" value="receptor-like serine/threonine-protein kinase SD1-8"/>
    <property type="match status" value="1"/>
</dbReference>
<dbReference type="Gene3D" id="2.90.10.10">
    <property type="entry name" value="Bulb-type lectin domain"/>
    <property type="match status" value="1"/>
</dbReference>
<dbReference type="Gene3D" id="3.30.200.20">
    <property type="entry name" value="Phosphorylase Kinase, domain 1"/>
    <property type="match status" value="1"/>
</dbReference>
<dbReference type="Gene3D" id="1.10.510.10">
    <property type="entry name" value="Transferase(Phosphotransferase) domain 1"/>
    <property type="match status" value="1"/>
</dbReference>
<dbReference type="InterPro" id="IPR001480">
    <property type="entry name" value="Bulb-type_lectin_dom"/>
</dbReference>
<dbReference type="InterPro" id="IPR036426">
    <property type="entry name" value="Bulb-type_lectin_dom_sf"/>
</dbReference>
<dbReference type="InterPro" id="IPR011009">
    <property type="entry name" value="Kinase-like_dom_sf"/>
</dbReference>
<dbReference type="InterPro" id="IPR003609">
    <property type="entry name" value="Pan_app"/>
</dbReference>
<dbReference type="InterPro" id="IPR000719">
    <property type="entry name" value="Prot_kinase_dom"/>
</dbReference>
<dbReference type="InterPro" id="IPR021820">
    <property type="entry name" value="S-locus_recpt_kinase_C"/>
</dbReference>
<dbReference type="InterPro" id="IPR000858">
    <property type="entry name" value="S_locus_glycoprot_dom"/>
</dbReference>
<dbReference type="InterPro" id="IPR008271">
    <property type="entry name" value="Ser/Thr_kinase_AS"/>
</dbReference>
<dbReference type="InterPro" id="IPR024171">
    <property type="entry name" value="SRK-like_kinase"/>
</dbReference>
<dbReference type="PANTHER" id="PTHR27002">
    <property type="entry name" value="RECEPTOR-LIKE SERINE/THREONINE-PROTEIN KINASE SD1-8"/>
    <property type="match status" value="1"/>
</dbReference>
<dbReference type="PANTHER" id="PTHR27002:SF838">
    <property type="entry name" value="RECEPTOR-LIKE SERINE_THREONINE-PROTEIN KINASE"/>
    <property type="match status" value="1"/>
</dbReference>
<dbReference type="Pfam" id="PF01453">
    <property type="entry name" value="B_lectin"/>
    <property type="match status" value="1"/>
</dbReference>
<dbReference type="Pfam" id="PF11883">
    <property type="entry name" value="DUF3403"/>
    <property type="match status" value="1"/>
</dbReference>
<dbReference type="Pfam" id="PF08276">
    <property type="entry name" value="PAN_2"/>
    <property type="match status" value="1"/>
</dbReference>
<dbReference type="Pfam" id="PF00069">
    <property type="entry name" value="Pkinase"/>
    <property type="match status" value="1"/>
</dbReference>
<dbReference type="Pfam" id="PF00954">
    <property type="entry name" value="S_locus_glycop"/>
    <property type="match status" value="1"/>
</dbReference>
<dbReference type="PIRSF" id="PIRSF000641">
    <property type="entry name" value="SRK"/>
    <property type="match status" value="1"/>
</dbReference>
<dbReference type="SMART" id="SM00108">
    <property type="entry name" value="B_lectin"/>
    <property type="match status" value="1"/>
</dbReference>
<dbReference type="SMART" id="SM00473">
    <property type="entry name" value="PAN_AP"/>
    <property type="match status" value="1"/>
</dbReference>
<dbReference type="SMART" id="SM00220">
    <property type="entry name" value="S_TKc"/>
    <property type="match status" value="1"/>
</dbReference>
<dbReference type="SUPFAM" id="SSF51110">
    <property type="entry name" value="alpha-D-mannose-specific plant lectins"/>
    <property type="match status" value="1"/>
</dbReference>
<dbReference type="SUPFAM" id="SSF56112">
    <property type="entry name" value="Protein kinase-like (PK-like)"/>
    <property type="match status" value="1"/>
</dbReference>
<dbReference type="PROSITE" id="PS50927">
    <property type="entry name" value="BULB_LECTIN"/>
    <property type="match status" value="1"/>
</dbReference>
<dbReference type="PROSITE" id="PS50948">
    <property type="entry name" value="PAN"/>
    <property type="match status" value="1"/>
</dbReference>
<dbReference type="PROSITE" id="PS50011">
    <property type="entry name" value="PROTEIN_KINASE_DOM"/>
    <property type="match status" value="1"/>
</dbReference>
<dbReference type="PROSITE" id="PS00108">
    <property type="entry name" value="PROTEIN_KINASE_ST"/>
    <property type="match status" value="1"/>
</dbReference>
<comment type="catalytic activity">
    <reaction>
        <text>L-seryl-[protein] + ATP = O-phospho-L-seryl-[protein] + ADP + H(+)</text>
        <dbReference type="Rhea" id="RHEA:17989"/>
        <dbReference type="Rhea" id="RHEA-COMP:9863"/>
        <dbReference type="Rhea" id="RHEA-COMP:11604"/>
        <dbReference type="ChEBI" id="CHEBI:15378"/>
        <dbReference type="ChEBI" id="CHEBI:29999"/>
        <dbReference type="ChEBI" id="CHEBI:30616"/>
        <dbReference type="ChEBI" id="CHEBI:83421"/>
        <dbReference type="ChEBI" id="CHEBI:456216"/>
        <dbReference type="EC" id="2.7.11.1"/>
    </reaction>
</comment>
<comment type="catalytic activity">
    <reaction>
        <text>L-threonyl-[protein] + ATP = O-phospho-L-threonyl-[protein] + ADP + H(+)</text>
        <dbReference type="Rhea" id="RHEA:46608"/>
        <dbReference type="Rhea" id="RHEA-COMP:11060"/>
        <dbReference type="Rhea" id="RHEA-COMP:11605"/>
        <dbReference type="ChEBI" id="CHEBI:15378"/>
        <dbReference type="ChEBI" id="CHEBI:30013"/>
        <dbReference type="ChEBI" id="CHEBI:30616"/>
        <dbReference type="ChEBI" id="CHEBI:61977"/>
        <dbReference type="ChEBI" id="CHEBI:456216"/>
        <dbReference type="EC" id="2.7.11.1"/>
    </reaction>
</comment>
<comment type="subcellular location">
    <subcellularLocation>
        <location evidence="10">Cell membrane</location>
        <topology evidence="10">Single-pass type I membrane protein</topology>
    </subcellularLocation>
</comment>
<comment type="alternative products">
    <event type="alternative splicing"/>
    <isoform>
        <id>Q9SXB8-1</id>
        <name>1</name>
        <sequence type="displayed"/>
    </isoform>
    <text>A number of isoforms are produced. According to EST sequences.</text>
</comment>
<comment type="similarity">
    <text evidence="5">Belongs to the protein kinase superfamily. Ser/Thr protein kinase family.</text>
</comment>
<comment type="sequence caution" evidence="9">
    <conflict type="erroneous gene model prediction">
        <sequence resource="EMBL-CDS" id="AAD49989"/>
    </conflict>
</comment>
<gene>
    <name type="ordered locus">At1g11330</name>
    <name type="ORF">T28P6.2</name>
</gene>
<name>Y1133_ARATH</name>
<accession>Q9SXB8</accession>
<accession>Q0TV72</accession>
<reference key="1">
    <citation type="journal article" date="2000" name="Nature">
        <title>Sequence and analysis of chromosome 1 of the plant Arabidopsis thaliana.</title>
        <authorList>
            <person name="Theologis A."/>
            <person name="Ecker J.R."/>
            <person name="Palm C.J."/>
            <person name="Federspiel N.A."/>
            <person name="Kaul S."/>
            <person name="White O."/>
            <person name="Alonso J."/>
            <person name="Altafi H."/>
            <person name="Araujo R."/>
            <person name="Bowman C.L."/>
            <person name="Brooks S.Y."/>
            <person name="Buehler E."/>
            <person name="Chan A."/>
            <person name="Chao Q."/>
            <person name="Chen H."/>
            <person name="Cheuk R.F."/>
            <person name="Chin C.W."/>
            <person name="Chung M.K."/>
            <person name="Conn L."/>
            <person name="Conway A.B."/>
            <person name="Conway A.R."/>
            <person name="Creasy T.H."/>
            <person name="Dewar K."/>
            <person name="Dunn P."/>
            <person name="Etgu P."/>
            <person name="Feldblyum T.V."/>
            <person name="Feng J.-D."/>
            <person name="Fong B."/>
            <person name="Fujii C.Y."/>
            <person name="Gill J.E."/>
            <person name="Goldsmith A.D."/>
            <person name="Haas B."/>
            <person name="Hansen N.F."/>
            <person name="Hughes B."/>
            <person name="Huizar L."/>
            <person name="Hunter J.L."/>
            <person name="Jenkins J."/>
            <person name="Johnson-Hopson C."/>
            <person name="Khan S."/>
            <person name="Khaykin E."/>
            <person name="Kim C.J."/>
            <person name="Koo H.L."/>
            <person name="Kremenetskaia I."/>
            <person name="Kurtz D.B."/>
            <person name="Kwan A."/>
            <person name="Lam B."/>
            <person name="Langin-Hooper S."/>
            <person name="Lee A."/>
            <person name="Lee J.M."/>
            <person name="Lenz C.A."/>
            <person name="Li J.H."/>
            <person name="Li Y.-P."/>
            <person name="Lin X."/>
            <person name="Liu S.X."/>
            <person name="Liu Z.A."/>
            <person name="Luros J.S."/>
            <person name="Maiti R."/>
            <person name="Marziali A."/>
            <person name="Militscher J."/>
            <person name="Miranda M."/>
            <person name="Nguyen M."/>
            <person name="Nierman W.C."/>
            <person name="Osborne B.I."/>
            <person name="Pai G."/>
            <person name="Peterson J."/>
            <person name="Pham P.K."/>
            <person name="Rizzo M."/>
            <person name="Rooney T."/>
            <person name="Rowley D."/>
            <person name="Sakano H."/>
            <person name="Salzberg S.L."/>
            <person name="Schwartz J.R."/>
            <person name="Shinn P."/>
            <person name="Southwick A.M."/>
            <person name="Sun H."/>
            <person name="Tallon L.J."/>
            <person name="Tambunga G."/>
            <person name="Toriumi M.J."/>
            <person name="Town C.D."/>
            <person name="Utterback T."/>
            <person name="Van Aken S."/>
            <person name="Vaysberg M."/>
            <person name="Vysotskaia V.S."/>
            <person name="Walker M."/>
            <person name="Wu D."/>
            <person name="Yu G."/>
            <person name="Fraser C.M."/>
            <person name="Venter J.C."/>
            <person name="Davis R.W."/>
        </authorList>
    </citation>
    <scope>NUCLEOTIDE SEQUENCE [LARGE SCALE GENOMIC DNA]</scope>
    <source>
        <strain>cv. Columbia</strain>
    </source>
</reference>
<reference key="2">
    <citation type="journal article" date="2017" name="Plant J.">
        <title>Araport11: a complete reannotation of the Arabidopsis thaliana reference genome.</title>
        <authorList>
            <person name="Cheng C.Y."/>
            <person name="Krishnakumar V."/>
            <person name="Chan A.P."/>
            <person name="Thibaud-Nissen F."/>
            <person name="Schobel S."/>
            <person name="Town C.D."/>
        </authorList>
    </citation>
    <scope>GENOME REANNOTATION</scope>
    <source>
        <strain>cv. Columbia</strain>
    </source>
</reference>
<reference key="3">
    <citation type="submission" date="2006-07" db="EMBL/GenBank/DDBJ databases">
        <title>Large-scale analysis of RIKEN Arabidopsis full-length (RAFL) cDNAs.</title>
        <authorList>
            <person name="Totoki Y."/>
            <person name="Seki M."/>
            <person name="Ishida J."/>
            <person name="Nakajima M."/>
            <person name="Enju A."/>
            <person name="Kamiya A."/>
            <person name="Narusaka M."/>
            <person name="Shin-i T."/>
            <person name="Nakagawa M."/>
            <person name="Sakamoto N."/>
            <person name="Oishi K."/>
            <person name="Kohara Y."/>
            <person name="Kobayashi M."/>
            <person name="Toyoda A."/>
            <person name="Sakaki Y."/>
            <person name="Sakurai T."/>
            <person name="Iida K."/>
            <person name="Akiyama K."/>
            <person name="Satou M."/>
            <person name="Toyoda T."/>
            <person name="Konagaya A."/>
            <person name="Carninci P."/>
            <person name="Kawai J."/>
            <person name="Hayashizaki Y."/>
            <person name="Shinozaki K."/>
        </authorList>
    </citation>
    <scope>NUCLEOTIDE SEQUENCE [LARGE SCALE MRNA] OF 236-842</scope>
    <source>
        <strain>cv. Columbia</strain>
    </source>
</reference>
<reference key="4">
    <citation type="journal article" date="2007" name="Mol. Cell. Proteomics">
        <title>A high content in lipid-modified peripheral proteins and integral receptor kinases features in the arabidopsis plasma membrane proteome.</title>
        <authorList>
            <person name="Marmagne A."/>
            <person name="Ferro M."/>
            <person name="Meinnel T."/>
            <person name="Bruley C."/>
            <person name="Kuhn L."/>
            <person name="Garin J."/>
            <person name="Barbier-Brygoo H."/>
            <person name="Ephritikhine G."/>
        </authorList>
    </citation>
    <scope>IDENTIFICATION BY MASS SPECTROMETRY</scope>
    <scope>SUBCELLULAR LOCATION [LARGE SCALE ANALYSIS]</scope>
</reference>
<protein>
    <recommendedName>
        <fullName>G-type lectin S-receptor-like serine/threonine-protein kinase At1g11330</fullName>
        <ecNumber>2.7.11.1</ecNumber>
    </recommendedName>
</protein>